<reference key="1">
    <citation type="journal article" date="2010" name="PLoS ONE">
        <title>The complete genome sequence of Haloferax volcanii DS2, a model archaeon.</title>
        <authorList>
            <person name="Hartman A.L."/>
            <person name="Norais C."/>
            <person name="Badger J.H."/>
            <person name="Delmas S."/>
            <person name="Haldenby S."/>
            <person name="Madupu R."/>
            <person name="Robinson J."/>
            <person name="Khouri H."/>
            <person name="Ren Q."/>
            <person name="Lowe T.M."/>
            <person name="Maupin-Furlow J."/>
            <person name="Pohlschroder M."/>
            <person name="Daniels C."/>
            <person name="Pfeiffer F."/>
            <person name="Allers T."/>
            <person name="Eisen J.A."/>
        </authorList>
    </citation>
    <scope>NUCLEOTIDE SEQUENCE [LARGE SCALE GENOMIC DNA]</scope>
    <source>
        <strain>ATCC 29605 / DSM 3757 / JCM 8879 / NBRC 14742 / NCIMB 2012 / VKM B-1768 / DS2</strain>
    </source>
</reference>
<reference key="2">
    <citation type="journal article" date="2014" name="PLoS Genet.">
        <title>Phylogenetically driven sequencing of extremely halophilic archaea reveals strategies for static and dynamic osmo-response.</title>
        <authorList>
            <person name="Becker E.A."/>
            <person name="Seitzer P.M."/>
            <person name="Tritt A."/>
            <person name="Larsen D."/>
            <person name="Krusor M."/>
            <person name="Yao A.I."/>
            <person name="Wu D."/>
            <person name="Madern D."/>
            <person name="Eisen J.A."/>
            <person name="Darling A.E."/>
            <person name="Facciotti M.T."/>
        </authorList>
    </citation>
    <scope>NUCLEOTIDE SEQUENCE [LARGE SCALE GENOMIC DNA]</scope>
    <source>
        <strain>ATCC 29605 / DSM 3757 / JCM 8879 / NBRC 14742 / NCIMB 2012 / VKM B-1768 / DS2</strain>
    </source>
</reference>
<reference key="3">
    <citation type="journal article" date="2009" name="J. Biol. Chem.">
        <title>D-xylose degradation pathway in the halophilic archaeon Haloferax volcanii.</title>
        <authorList>
            <person name="Johnsen U."/>
            <person name="Dambeck M."/>
            <person name="Zaiss H."/>
            <person name="Fuhrer T."/>
            <person name="Soppa J."/>
            <person name="Sauer U."/>
            <person name="Schonheit P."/>
        </authorList>
    </citation>
    <scope>PROTEIN SEQUENCE OF 2-20</scope>
    <scope>SUBUNIT</scope>
    <scope>FUNCTION</scope>
    <scope>CATALYTIC ACTIVITY</scope>
    <scope>BIOPHYSICOCHEMICAL PROPERTIES</scope>
    <scope>INDUCTION</scope>
    <scope>DISRUPTION PHENOTYPE</scope>
    <source>
        <strain>DS2 / DS70</strain>
    </source>
</reference>
<reference key="4">
    <citation type="journal article" date="2015" name="Environ. Microbiol.">
        <title>XacR - a novel transcriptional regulator of D-xylose and L-arabinose catabolism in the haloarchaeon Haloferax volcanii.</title>
        <authorList>
            <person name="Johnsen U."/>
            <person name="Sutter J.M."/>
            <person name="Schulz A.C."/>
            <person name="Taestensen J.B."/>
            <person name="Schoenheit P."/>
        </authorList>
    </citation>
    <scope>INDUCTION</scope>
</reference>
<gene>
    <name evidence="3" type="primary">xacD</name>
    <name type="synonym">xad</name>
    <name type="ordered locus">HVO_B0038A</name>
    <name type="ORF">C498_01565</name>
</gene>
<evidence type="ECO:0000269" key="1">
    <source>
    </source>
</evidence>
<evidence type="ECO:0000269" key="2">
    <source>
    </source>
</evidence>
<evidence type="ECO:0000303" key="3">
    <source>
    </source>
</evidence>
<accession>D4GP40</accession>
<dbReference type="EC" id="4.2.1.82"/>
<dbReference type="EMBL" id="CP001953">
    <property type="protein sequence ID" value="ADE01444.1"/>
    <property type="molecule type" value="Genomic_DNA"/>
</dbReference>
<dbReference type="EMBL" id="AOHU01000021">
    <property type="protein sequence ID" value="ELY36793.1"/>
    <property type="molecule type" value="Genomic_DNA"/>
</dbReference>
<dbReference type="RefSeq" id="WP_004041116.1">
    <property type="nucleotide sequence ID" value="NC_013964.1"/>
</dbReference>
<dbReference type="SMR" id="D4GP40"/>
<dbReference type="STRING" id="309800.HVO_1488"/>
<dbReference type="PaxDb" id="309800-C498_01565"/>
<dbReference type="DNASU" id="8919180"/>
<dbReference type="EnsemblBacteria" id="ADE01444">
    <property type="protein sequence ID" value="ADE01444"/>
    <property type="gene ID" value="HVO_B0038A"/>
</dbReference>
<dbReference type="GeneID" id="8919180"/>
<dbReference type="KEGG" id="hvo:HVO_B0038A"/>
<dbReference type="PATRIC" id="fig|309800.29.peg.298"/>
<dbReference type="eggNOG" id="arCOG01168">
    <property type="taxonomic scope" value="Archaea"/>
</dbReference>
<dbReference type="HOGENOM" id="CLU_030273_3_2_2"/>
<dbReference type="OrthoDB" id="42605at2157"/>
<dbReference type="BioCyc" id="MetaCyc:MONOMER-16374"/>
<dbReference type="BRENDA" id="4.2.1.82">
    <property type="organism ID" value="2561"/>
</dbReference>
<dbReference type="SABIO-RK" id="D4GP40"/>
<dbReference type="Proteomes" id="UP000008243">
    <property type="component" value="Plasmid pHV3"/>
</dbReference>
<dbReference type="Proteomes" id="UP000011532">
    <property type="component" value="Unassembled WGS sequence"/>
</dbReference>
<dbReference type="GO" id="GO:0050401">
    <property type="term" value="F:xylonate dehydratase activity"/>
    <property type="evidence" value="ECO:0007669"/>
    <property type="project" value="UniProtKB-EC"/>
</dbReference>
<dbReference type="GO" id="GO:0009063">
    <property type="term" value="P:amino acid catabolic process"/>
    <property type="evidence" value="ECO:0007669"/>
    <property type="project" value="InterPro"/>
</dbReference>
<dbReference type="CDD" id="cd03316">
    <property type="entry name" value="MR_like"/>
    <property type="match status" value="1"/>
</dbReference>
<dbReference type="Gene3D" id="3.20.20.120">
    <property type="entry name" value="Enolase-like C-terminal domain"/>
    <property type="match status" value="1"/>
</dbReference>
<dbReference type="Gene3D" id="3.30.390.10">
    <property type="entry name" value="Enolase-like, N-terminal domain"/>
    <property type="match status" value="1"/>
</dbReference>
<dbReference type="InterPro" id="IPR034593">
    <property type="entry name" value="DgoD-like"/>
</dbReference>
<dbReference type="InterPro" id="IPR036849">
    <property type="entry name" value="Enolase-like_C_sf"/>
</dbReference>
<dbReference type="InterPro" id="IPR029017">
    <property type="entry name" value="Enolase-like_N"/>
</dbReference>
<dbReference type="InterPro" id="IPR029065">
    <property type="entry name" value="Enolase_C-like"/>
</dbReference>
<dbReference type="InterPro" id="IPR018110">
    <property type="entry name" value="Mandel_Rmase/mucon_lact_enz_CS"/>
</dbReference>
<dbReference type="InterPro" id="IPR013342">
    <property type="entry name" value="Mandelate_racemase_C"/>
</dbReference>
<dbReference type="InterPro" id="IPR013341">
    <property type="entry name" value="Mandelate_racemase_N_dom"/>
</dbReference>
<dbReference type="InterPro" id="IPR034624">
    <property type="entry name" value="Xylonate_dehydratase_2"/>
</dbReference>
<dbReference type="PANTHER" id="PTHR48080:SF2">
    <property type="entry name" value="D-GALACTONATE DEHYDRATASE"/>
    <property type="match status" value="1"/>
</dbReference>
<dbReference type="PANTHER" id="PTHR48080">
    <property type="entry name" value="D-GALACTONATE DEHYDRATASE-RELATED"/>
    <property type="match status" value="1"/>
</dbReference>
<dbReference type="Pfam" id="PF13378">
    <property type="entry name" value="MR_MLE_C"/>
    <property type="match status" value="1"/>
</dbReference>
<dbReference type="Pfam" id="PF02746">
    <property type="entry name" value="MR_MLE_N"/>
    <property type="match status" value="1"/>
</dbReference>
<dbReference type="SFLD" id="SFLDS00001">
    <property type="entry name" value="Enolase"/>
    <property type="match status" value="1"/>
</dbReference>
<dbReference type="SFLD" id="SFLDF00564">
    <property type="entry name" value="xylonate_dehydratase_2"/>
    <property type="match status" value="1"/>
</dbReference>
<dbReference type="SMART" id="SM00922">
    <property type="entry name" value="MR_MLE"/>
    <property type="match status" value="1"/>
</dbReference>
<dbReference type="SUPFAM" id="SSF51604">
    <property type="entry name" value="Enolase C-terminal domain-like"/>
    <property type="match status" value="1"/>
</dbReference>
<dbReference type="SUPFAM" id="SSF54826">
    <property type="entry name" value="Enolase N-terminal domain-like"/>
    <property type="match status" value="1"/>
</dbReference>
<dbReference type="PROSITE" id="PS00909">
    <property type="entry name" value="MR_MLE_2"/>
    <property type="match status" value="1"/>
</dbReference>
<organism>
    <name type="scientific">Haloferax volcanii (strain ATCC 29605 / DSM 3757 / JCM 8879 / NBRC 14742 / NCIMB 2012 / VKM B-1768 / DS2)</name>
    <name type="common">Halobacterium volcanii</name>
    <dbReference type="NCBI Taxonomy" id="309800"/>
    <lineage>
        <taxon>Archaea</taxon>
        <taxon>Methanobacteriati</taxon>
        <taxon>Methanobacteriota</taxon>
        <taxon>Stenosarchaea group</taxon>
        <taxon>Halobacteria</taxon>
        <taxon>Halobacteriales</taxon>
        <taxon>Haloferacaceae</taxon>
        <taxon>Haloferax</taxon>
    </lineage>
</organism>
<comment type="function">
    <text evidence="1">NADP-dependent D-xylose dehydrogenase involved in the degradation of D-xylose, a major component of hemicelluloses such as xylan. Catalyzes the third reaction in the xylose utilization pathway through dehydratation of D-xylonate into 2-dehydro-3-deoxy-D-xylonate.</text>
</comment>
<comment type="catalytic activity">
    <reaction evidence="1">
        <text>D-xylonate = 2-dehydro-3-deoxy-D-arabinonate + H2O</text>
        <dbReference type="Rhea" id="RHEA:19157"/>
        <dbReference type="ChEBI" id="CHEBI:15377"/>
        <dbReference type="ChEBI" id="CHEBI:16699"/>
        <dbReference type="ChEBI" id="CHEBI:17746"/>
        <dbReference type="EC" id="4.2.1.82"/>
    </reaction>
</comment>
<comment type="biophysicochemical properties">
    <kinetics>
        <KM evidence="1">0.55 mM for xylonate</KM>
        <KM evidence="1">0.4 mM for gluconate</KM>
    </kinetics>
</comment>
<comment type="subunit">
    <text evidence="1">Homooctamer.</text>
</comment>
<comment type="induction">
    <text evidence="1 2">Transcriptionally up-regulated by both L-arabinose and D-xylose via the pentose-specific regulator XacR.</text>
</comment>
<comment type="disruption phenotype">
    <text evidence="1">Impairs growth on D-xylose as sole energy and carbon substrate.</text>
</comment>
<keyword id="KW-0903">Direct protein sequencing</keyword>
<keyword id="KW-0456">Lyase</keyword>
<keyword id="KW-0614">Plasmid</keyword>
<keyword id="KW-1185">Reference proteome</keyword>
<protein>
    <recommendedName>
        <fullName>D-xylonate dehydratase</fullName>
        <shortName>XAD</shortName>
        <ecNumber>4.2.1.82</ecNumber>
    </recommendedName>
</protein>
<geneLocation type="plasmid">
    <name>pHV3</name>
</geneLocation>
<name>XAD_HALVD</name>
<proteinExistence type="evidence at protein level"/>
<feature type="initiator methionine" description="Removed" evidence="1">
    <location>
        <position position="1"/>
    </location>
</feature>
<feature type="chain" id="PRO_0000428801" description="D-xylonate dehydratase">
    <location>
        <begin position="2"/>
        <end position="412"/>
    </location>
</feature>
<sequence length="412" mass="45529">MVEQAKLSDPNAEYTMRDLSAETIDITNPRGGVRDAEITDVQTTMVDGNYPWILVRVYTDAGVVGTGEAYWGGGDTAIIERMKPFLVGENPLDIDRLYEHLVQKMSGEGSVSGKVISAISGIEIALHDVAGKLLDVPAYQLVGGKYRDEVRVYCDLHTEDEANPQACAEEGVRVVEELGYDAIKFDLDVPSGHEKDRANRHLRNPEIDHKVEIVEAVTEAVGDRADVAFDCHWSFTGGSAKRLASELEDYDVWWLEDPVPPENHDVQKLVTQSTTTPIAVGENVYRKFGQRTLLEPQAVDIIAPDLPRVGGMRETRKIADLADMYYIPVAMHNVSSPIGTMASAQVAAAIPNSLALEYHSYQLGWWEDLVEEDDLIQNGHMEIPEKPGLGLTLDLDAVEAHMVEGETLFDEE</sequence>